<comment type="subunit">
    <text evidence="1">Part of the 50S ribosomal subunit.</text>
</comment>
<comment type="similarity">
    <text evidence="1">Belongs to the bacterial ribosomal protein bL31 family. Type B subfamily.</text>
</comment>
<sequence length="89" mass="10154">MKKGIHPENYREVLFYDGSVQMGWIIRSCAATTKTMVWEDGKEYPFYPLDTSSASHPVYTGKRREVNTEGRASKFNERFKGMAGLAAKK</sequence>
<protein>
    <recommendedName>
        <fullName evidence="1">Large ribosomal subunit protein bL31B</fullName>
    </recommendedName>
    <alternativeName>
        <fullName evidence="2">50S ribosomal protein L31 type B</fullName>
    </alternativeName>
</protein>
<accession>B3GZ73</accession>
<organism>
    <name type="scientific">Actinobacillus pleuropneumoniae serotype 7 (strain AP76)</name>
    <dbReference type="NCBI Taxonomy" id="537457"/>
    <lineage>
        <taxon>Bacteria</taxon>
        <taxon>Pseudomonadati</taxon>
        <taxon>Pseudomonadota</taxon>
        <taxon>Gammaproteobacteria</taxon>
        <taxon>Pasteurellales</taxon>
        <taxon>Pasteurellaceae</taxon>
        <taxon>Actinobacillus</taxon>
    </lineage>
</organism>
<proteinExistence type="inferred from homology"/>
<name>RL31B_ACTP7</name>
<gene>
    <name evidence="1" type="primary">rpmE2</name>
    <name type="ordered locus">APP7_1907</name>
</gene>
<evidence type="ECO:0000255" key="1">
    <source>
        <dbReference type="HAMAP-Rule" id="MF_00502"/>
    </source>
</evidence>
<evidence type="ECO:0000305" key="2"/>
<dbReference type="EMBL" id="CP001091">
    <property type="protein sequence ID" value="ACE62559.1"/>
    <property type="molecule type" value="Genomic_DNA"/>
</dbReference>
<dbReference type="RefSeq" id="WP_005599422.1">
    <property type="nucleotide sequence ID" value="NC_010939.1"/>
</dbReference>
<dbReference type="SMR" id="B3GZ73"/>
<dbReference type="KEGG" id="apa:APP7_1907"/>
<dbReference type="HOGENOM" id="CLU_114306_2_1_6"/>
<dbReference type="Proteomes" id="UP000001226">
    <property type="component" value="Chromosome"/>
</dbReference>
<dbReference type="GO" id="GO:1990904">
    <property type="term" value="C:ribonucleoprotein complex"/>
    <property type="evidence" value="ECO:0007669"/>
    <property type="project" value="UniProtKB-KW"/>
</dbReference>
<dbReference type="GO" id="GO:0005840">
    <property type="term" value="C:ribosome"/>
    <property type="evidence" value="ECO:0007669"/>
    <property type="project" value="UniProtKB-KW"/>
</dbReference>
<dbReference type="GO" id="GO:0003735">
    <property type="term" value="F:structural constituent of ribosome"/>
    <property type="evidence" value="ECO:0007669"/>
    <property type="project" value="InterPro"/>
</dbReference>
<dbReference type="GO" id="GO:0006412">
    <property type="term" value="P:translation"/>
    <property type="evidence" value="ECO:0007669"/>
    <property type="project" value="UniProtKB-UniRule"/>
</dbReference>
<dbReference type="Gene3D" id="4.10.830.30">
    <property type="entry name" value="Ribosomal protein L31"/>
    <property type="match status" value="1"/>
</dbReference>
<dbReference type="HAMAP" id="MF_00502">
    <property type="entry name" value="Ribosomal_bL31_2"/>
    <property type="match status" value="1"/>
</dbReference>
<dbReference type="InterPro" id="IPR034704">
    <property type="entry name" value="Ribosomal_bL28/bL31-like_sf"/>
</dbReference>
<dbReference type="InterPro" id="IPR002150">
    <property type="entry name" value="Ribosomal_bL31"/>
</dbReference>
<dbReference type="InterPro" id="IPR027493">
    <property type="entry name" value="Ribosomal_bL31_B"/>
</dbReference>
<dbReference type="InterPro" id="IPR042105">
    <property type="entry name" value="Ribosomal_bL31_sf"/>
</dbReference>
<dbReference type="NCBIfam" id="TIGR00105">
    <property type="entry name" value="L31"/>
    <property type="match status" value="1"/>
</dbReference>
<dbReference type="NCBIfam" id="NF002462">
    <property type="entry name" value="PRK01678.1"/>
    <property type="match status" value="1"/>
</dbReference>
<dbReference type="PANTHER" id="PTHR33280">
    <property type="entry name" value="50S RIBOSOMAL PROTEIN L31, CHLOROPLASTIC"/>
    <property type="match status" value="1"/>
</dbReference>
<dbReference type="PANTHER" id="PTHR33280:SF1">
    <property type="entry name" value="LARGE RIBOSOMAL SUBUNIT PROTEIN BL31C"/>
    <property type="match status" value="1"/>
</dbReference>
<dbReference type="Pfam" id="PF01197">
    <property type="entry name" value="Ribosomal_L31"/>
    <property type="match status" value="1"/>
</dbReference>
<dbReference type="PRINTS" id="PR01249">
    <property type="entry name" value="RIBOSOMALL31"/>
</dbReference>
<dbReference type="SUPFAM" id="SSF143800">
    <property type="entry name" value="L28p-like"/>
    <property type="match status" value="1"/>
</dbReference>
<dbReference type="PROSITE" id="PS01143">
    <property type="entry name" value="RIBOSOMAL_L31"/>
    <property type="match status" value="1"/>
</dbReference>
<reference key="1">
    <citation type="submission" date="2008-06" db="EMBL/GenBank/DDBJ databases">
        <title>Genome and proteome analysis of A. pleuropneumoniae serotype 7.</title>
        <authorList>
            <person name="Linke B."/>
            <person name="Buettner F."/>
            <person name="Martinez-Arias R."/>
            <person name="Goesmann A."/>
            <person name="Baltes N."/>
            <person name="Tegetmeyer H."/>
            <person name="Singh M."/>
            <person name="Gerlach G.F."/>
        </authorList>
    </citation>
    <scope>NUCLEOTIDE SEQUENCE [LARGE SCALE GENOMIC DNA]</scope>
    <source>
        <strain>AP76</strain>
    </source>
</reference>
<feature type="chain" id="PRO_1000126779" description="Large ribosomal subunit protein bL31B">
    <location>
        <begin position="1"/>
        <end position="89"/>
    </location>
</feature>
<keyword id="KW-0687">Ribonucleoprotein</keyword>
<keyword id="KW-0689">Ribosomal protein</keyword>